<reference key="1">
    <citation type="submission" date="2006-03" db="EMBL/GenBank/DDBJ databases">
        <title>Complete sequence of Shewanella denitrificans OS217.</title>
        <authorList>
            <consortium name="US DOE Joint Genome Institute"/>
            <person name="Copeland A."/>
            <person name="Lucas S."/>
            <person name="Lapidus A."/>
            <person name="Barry K."/>
            <person name="Detter J.C."/>
            <person name="Glavina del Rio T."/>
            <person name="Hammon N."/>
            <person name="Israni S."/>
            <person name="Dalin E."/>
            <person name="Tice H."/>
            <person name="Pitluck S."/>
            <person name="Brettin T."/>
            <person name="Bruce D."/>
            <person name="Han C."/>
            <person name="Tapia R."/>
            <person name="Gilna P."/>
            <person name="Kiss H."/>
            <person name="Schmutz J."/>
            <person name="Larimer F."/>
            <person name="Land M."/>
            <person name="Hauser L."/>
            <person name="Kyrpides N."/>
            <person name="Lykidis A."/>
            <person name="Richardson P."/>
        </authorList>
    </citation>
    <scope>NUCLEOTIDE SEQUENCE [LARGE SCALE GENOMIC DNA]</scope>
    <source>
        <strain>OS217 / ATCC BAA-1090 / DSM 15013</strain>
    </source>
</reference>
<organism>
    <name type="scientific">Shewanella denitrificans (strain OS217 / ATCC BAA-1090 / DSM 15013)</name>
    <dbReference type="NCBI Taxonomy" id="318161"/>
    <lineage>
        <taxon>Bacteria</taxon>
        <taxon>Pseudomonadati</taxon>
        <taxon>Pseudomonadota</taxon>
        <taxon>Gammaproteobacteria</taxon>
        <taxon>Alteromonadales</taxon>
        <taxon>Shewanellaceae</taxon>
        <taxon>Shewanella</taxon>
    </lineage>
</organism>
<name>NHAB_SHEDO</name>
<keyword id="KW-0050">Antiport</keyword>
<keyword id="KW-0997">Cell inner membrane</keyword>
<keyword id="KW-1003">Cell membrane</keyword>
<keyword id="KW-0406">Ion transport</keyword>
<keyword id="KW-0472">Membrane</keyword>
<keyword id="KW-1185">Reference proteome</keyword>
<keyword id="KW-0915">Sodium</keyword>
<keyword id="KW-0739">Sodium transport</keyword>
<keyword id="KW-0812">Transmembrane</keyword>
<keyword id="KW-1133">Transmembrane helix</keyword>
<keyword id="KW-0813">Transport</keyword>
<gene>
    <name evidence="1" type="primary">nhaB</name>
    <name type="ordered locus">Sden_1634</name>
</gene>
<sequence length="528" mass="57852">MPANKIDALFVNFLGNSPKWYKLAILSFLVINPLIFFFINPFVAGWVLVLEFIFTLAMALKCYPLQPGGLLAIQAVAIGMTSPSQVLHEIQANLEVLLLLIFMVAGIYFMKQLLLFVFTKMITKVRSKTYLSLLFCVAAAFLSAFLDALTVIAVIIAVGIGFYSIYHKVASGKDFSSDHDHTSESHDQLNADDLESFRGFLRNLLMHAGVGTALGGVCTMVGEPQNLIIAAQAHWQFGEFFIRMSPVTIPVLLSGLLTCVVVEKLKWFTYGVQLPENVHKILSDYDAYEDTHRSDRDKVKLIIQALVGVWLVAGLALHLASVGLIGLSVIILTTAFNGITDEHSLGKAFEEALPFTALLAVFFAIVGVIIDQRLFAPVIQWALTFEGNAQLVVFFIANGVLSMVSDNVFVGTVYINEVKSALLSGQITRDQFDLLAVAINTGTNLPSVATPNGQAAFLFLLTSALAPLIRLSYGRMVIMALPYTLVLSIVGIVTIESGFLVEMTQYFYDNNIIMHHSAKELTESVVGH</sequence>
<dbReference type="EMBL" id="CP000302">
    <property type="protein sequence ID" value="ABE54918.1"/>
    <property type="molecule type" value="Genomic_DNA"/>
</dbReference>
<dbReference type="RefSeq" id="WP_011496076.1">
    <property type="nucleotide sequence ID" value="NC_007954.1"/>
</dbReference>
<dbReference type="SMR" id="Q12NQ8"/>
<dbReference type="STRING" id="318161.Sden_1634"/>
<dbReference type="KEGG" id="sdn:Sden_1634"/>
<dbReference type="eggNOG" id="COG3067">
    <property type="taxonomic scope" value="Bacteria"/>
</dbReference>
<dbReference type="HOGENOM" id="CLU_041110_0_0_6"/>
<dbReference type="OrthoDB" id="5288732at2"/>
<dbReference type="Proteomes" id="UP000001982">
    <property type="component" value="Chromosome"/>
</dbReference>
<dbReference type="GO" id="GO:0005886">
    <property type="term" value="C:plasma membrane"/>
    <property type="evidence" value="ECO:0007669"/>
    <property type="project" value="UniProtKB-SubCell"/>
</dbReference>
<dbReference type="GO" id="GO:0015385">
    <property type="term" value="F:sodium:proton antiporter activity"/>
    <property type="evidence" value="ECO:0007669"/>
    <property type="project" value="InterPro"/>
</dbReference>
<dbReference type="HAMAP" id="MF_01599">
    <property type="entry name" value="NhaB"/>
    <property type="match status" value="1"/>
</dbReference>
<dbReference type="InterPro" id="IPR004671">
    <property type="entry name" value="Na+/H+_antiporter_NhaB"/>
</dbReference>
<dbReference type="NCBIfam" id="TIGR00774">
    <property type="entry name" value="NhaB"/>
    <property type="match status" value="1"/>
</dbReference>
<dbReference type="NCBIfam" id="NF007093">
    <property type="entry name" value="PRK09547.1"/>
    <property type="match status" value="1"/>
</dbReference>
<dbReference type="PANTHER" id="PTHR43302:SF1">
    <property type="entry name" value="NA(+)_H(+) ANTIPORTER NHAB"/>
    <property type="match status" value="1"/>
</dbReference>
<dbReference type="PANTHER" id="PTHR43302">
    <property type="entry name" value="TRANSPORTER ARSB-RELATED"/>
    <property type="match status" value="1"/>
</dbReference>
<dbReference type="Pfam" id="PF06450">
    <property type="entry name" value="NhaB"/>
    <property type="match status" value="1"/>
</dbReference>
<dbReference type="PRINTS" id="PR00173">
    <property type="entry name" value="EDTRNSPORT"/>
</dbReference>
<evidence type="ECO:0000255" key="1">
    <source>
        <dbReference type="HAMAP-Rule" id="MF_01599"/>
    </source>
</evidence>
<proteinExistence type="inferred from homology"/>
<protein>
    <recommendedName>
        <fullName evidence="1">Na(+)/H(+) antiporter NhaB</fullName>
    </recommendedName>
    <alternativeName>
        <fullName evidence="1">Sodium/proton antiporter NhaB</fullName>
    </alternativeName>
</protein>
<comment type="function">
    <text evidence="1">Na(+)/H(+) antiporter that extrudes sodium in exchange for external protons.</text>
</comment>
<comment type="catalytic activity">
    <reaction evidence="1">
        <text>2 Na(+)(in) + 3 H(+)(out) = 2 Na(+)(out) + 3 H(+)(in)</text>
        <dbReference type="Rhea" id="RHEA:29247"/>
        <dbReference type="ChEBI" id="CHEBI:15378"/>
        <dbReference type="ChEBI" id="CHEBI:29101"/>
    </reaction>
    <physiologicalReaction direction="left-to-right" evidence="1">
        <dbReference type="Rhea" id="RHEA:29248"/>
    </physiologicalReaction>
</comment>
<comment type="subcellular location">
    <subcellularLocation>
        <location evidence="1">Cell inner membrane</location>
        <topology evidence="1">Multi-pass membrane protein</topology>
    </subcellularLocation>
</comment>
<comment type="similarity">
    <text evidence="1">Belongs to the NhaB Na(+)/H(+) (TC 2.A.34) antiporter family.</text>
</comment>
<feature type="chain" id="PRO_0000333127" description="Na(+)/H(+) antiporter NhaB">
    <location>
        <begin position="1"/>
        <end position="528"/>
    </location>
</feature>
<feature type="transmembrane region" description="Helical" evidence="1">
    <location>
        <begin position="11"/>
        <end position="31"/>
    </location>
</feature>
<feature type="transmembrane region" description="Helical" evidence="1">
    <location>
        <begin position="67"/>
        <end position="87"/>
    </location>
</feature>
<feature type="transmembrane region" description="Helical" evidence="1">
    <location>
        <begin position="98"/>
        <end position="118"/>
    </location>
</feature>
<feature type="transmembrane region" description="Helical" evidence="1">
    <location>
        <begin position="140"/>
        <end position="160"/>
    </location>
</feature>
<feature type="transmembrane region" description="Helical" evidence="1">
    <location>
        <begin position="240"/>
        <end position="260"/>
    </location>
</feature>
<feature type="transmembrane region" description="Helical" evidence="1">
    <location>
        <begin position="311"/>
        <end position="331"/>
    </location>
</feature>
<feature type="transmembrane region" description="Helical" evidence="1">
    <location>
        <begin position="350"/>
        <end position="370"/>
    </location>
</feature>
<feature type="transmembrane region" description="Helical" evidence="1">
    <location>
        <begin position="391"/>
        <end position="411"/>
    </location>
</feature>
<feature type="transmembrane region" description="Helical" evidence="1">
    <location>
        <begin position="449"/>
        <end position="469"/>
    </location>
</feature>
<feature type="transmembrane region" description="Helical" evidence="1">
    <location>
        <begin position="476"/>
        <end position="496"/>
    </location>
</feature>
<accession>Q12NQ8</accession>